<organism>
    <name type="scientific">Thiobacillus denitrificans (strain ATCC 25259 / T1)</name>
    <dbReference type="NCBI Taxonomy" id="292415"/>
    <lineage>
        <taxon>Bacteria</taxon>
        <taxon>Pseudomonadati</taxon>
        <taxon>Pseudomonadota</taxon>
        <taxon>Betaproteobacteria</taxon>
        <taxon>Nitrosomonadales</taxon>
        <taxon>Thiobacillaceae</taxon>
        <taxon>Thiobacillus</taxon>
    </lineage>
</organism>
<feature type="chain" id="PRO_0000224234" description="Chaperone protein HtpG">
    <location>
        <begin position="1"/>
        <end position="633"/>
    </location>
</feature>
<feature type="region of interest" description="A; substrate-binding" evidence="1">
    <location>
        <begin position="1"/>
        <end position="341"/>
    </location>
</feature>
<feature type="region of interest" description="B" evidence="1">
    <location>
        <begin position="342"/>
        <end position="558"/>
    </location>
</feature>
<feature type="region of interest" description="C" evidence="1">
    <location>
        <begin position="559"/>
        <end position="633"/>
    </location>
</feature>
<protein>
    <recommendedName>
        <fullName evidence="1">Chaperone protein HtpG</fullName>
    </recommendedName>
    <alternativeName>
        <fullName evidence="1">Heat shock protein HtpG</fullName>
    </alternativeName>
    <alternativeName>
        <fullName evidence="1">High temperature protein G</fullName>
    </alternativeName>
</protein>
<dbReference type="EMBL" id="CP000116">
    <property type="protein sequence ID" value="AAZ97031.1"/>
    <property type="molecule type" value="Genomic_DNA"/>
</dbReference>
<dbReference type="RefSeq" id="WP_011311590.1">
    <property type="nucleotide sequence ID" value="NC_007404.1"/>
</dbReference>
<dbReference type="SMR" id="Q3SJW8"/>
<dbReference type="STRING" id="292415.Tbd_1078"/>
<dbReference type="KEGG" id="tbd:Tbd_1078"/>
<dbReference type="eggNOG" id="COG0326">
    <property type="taxonomic scope" value="Bacteria"/>
</dbReference>
<dbReference type="HOGENOM" id="CLU_006684_3_0_4"/>
<dbReference type="OrthoDB" id="9802640at2"/>
<dbReference type="Proteomes" id="UP000008291">
    <property type="component" value="Chromosome"/>
</dbReference>
<dbReference type="GO" id="GO:0005737">
    <property type="term" value="C:cytoplasm"/>
    <property type="evidence" value="ECO:0007669"/>
    <property type="project" value="UniProtKB-SubCell"/>
</dbReference>
<dbReference type="GO" id="GO:0005524">
    <property type="term" value="F:ATP binding"/>
    <property type="evidence" value="ECO:0007669"/>
    <property type="project" value="UniProtKB-UniRule"/>
</dbReference>
<dbReference type="GO" id="GO:0016887">
    <property type="term" value="F:ATP hydrolysis activity"/>
    <property type="evidence" value="ECO:0007669"/>
    <property type="project" value="InterPro"/>
</dbReference>
<dbReference type="GO" id="GO:0140662">
    <property type="term" value="F:ATP-dependent protein folding chaperone"/>
    <property type="evidence" value="ECO:0007669"/>
    <property type="project" value="InterPro"/>
</dbReference>
<dbReference type="GO" id="GO:0051082">
    <property type="term" value="F:unfolded protein binding"/>
    <property type="evidence" value="ECO:0007669"/>
    <property type="project" value="UniProtKB-UniRule"/>
</dbReference>
<dbReference type="CDD" id="cd16927">
    <property type="entry name" value="HATPase_Hsp90-like"/>
    <property type="match status" value="1"/>
</dbReference>
<dbReference type="FunFam" id="3.30.230.80:FF:000002">
    <property type="entry name" value="Molecular chaperone HtpG"/>
    <property type="match status" value="1"/>
</dbReference>
<dbReference type="FunFam" id="3.30.565.10:FF:000009">
    <property type="entry name" value="Molecular chaperone HtpG"/>
    <property type="match status" value="1"/>
</dbReference>
<dbReference type="Gene3D" id="3.30.230.80">
    <property type="match status" value="1"/>
</dbReference>
<dbReference type="Gene3D" id="3.40.50.11260">
    <property type="match status" value="1"/>
</dbReference>
<dbReference type="Gene3D" id="1.20.120.790">
    <property type="entry name" value="Heat shock protein 90, C-terminal domain"/>
    <property type="match status" value="1"/>
</dbReference>
<dbReference type="Gene3D" id="3.30.565.10">
    <property type="entry name" value="Histidine kinase-like ATPase, C-terminal domain"/>
    <property type="match status" value="1"/>
</dbReference>
<dbReference type="HAMAP" id="MF_00505">
    <property type="entry name" value="HSP90"/>
    <property type="match status" value="1"/>
</dbReference>
<dbReference type="InterPro" id="IPR036890">
    <property type="entry name" value="HATPase_C_sf"/>
</dbReference>
<dbReference type="InterPro" id="IPR019805">
    <property type="entry name" value="Heat_shock_protein_90_CS"/>
</dbReference>
<dbReference type="InterPro" id="IPR037196">
    <property type="entry name" value="HSP90_C"/>
</dbReference>
<dbReference type="InterPro" id="IPR001404">
    <property type="entry name" value="Hsp90_fam"/>
</dbReference>
<dbReference type="InterPro" id="IPR020575">
    <property type="entry name" value="Hsp90_N"/>
</dbReference>
<dbReference type="InterPro" id="IPR020568">
    <property type="entry name" value="Ribosomal_Su5_D2-typ_SF"/>
</dbReference>
<dbReference type="NCBIfam" id="NF003555">
    <property type="entry name" value="PRK05218.1"/>
    <property type="match status" value="1"/>
</dbReference>
<dbReference type="PANTHER" id="PTHR11528">
    <property type="entry name" value="HEAT SHOCK PROTEIN 90 FAMILY MEMBER"/>
    <property type="match status" value="1"/>
</dbReference>
<dbReference type="Pfam" id="PF13589">
    <property type="entry name" value="HATPase_c_3"/>
    <property type="match status" value="1"/>
</dbReference>
<dbReference type="Pfam" id="PF00183">
    <property type="entry name" value="HSP90"/>
    <property type="match status" value="1"/>
</dbReference>
<dbReference type="PIRSF" id="PIRSF002583">
    <property type="entry name" value="Hsp90"/>
    <property type="match status" value="1"/>
</dbReference>
<dbReference type="PRINTS" id="PR00775">
    <property type="entry name" value="HEATSHOCK90"/>
</dbReference>
<dbReference type="SMART" id="SM00387">
    <property type="entry name" value="HATPase_c"/>
    <property type="match status" value="1"/>
</dbReference>
<dbReference type="SUPFAM" id="SSF55874">
    <property type="entry name" value="ATPase domain of HSP90 chaperone/DNA topoisomerase II/histidine kinase"/>
    <property type="match status" value="1"/>
</dbReference>
<dbReference type="SUPFAM" id="SSF110942">
    <property type="entry name" value="HSP90 C-terminal domain"/>
    <property type="match status" value="1"/>
</dbReference>
<dbReference type="SUPFAM" id="SSF54211">
    <property type="entry name" value="Ribosomal protein S5 domain 2-like"/>
    <property type="match status" value="1"/>
</dbReference>
<dbReference type="PROSITE" id="PS00298">
    <property type="entry name" value="HSP90"/>
    <property type="match status" value="1"/>
</dbReference>
<proteinExistence type="inferred from homology"/>
<accession>Q3SJW8</accession>
<name>HTPG_THIDA</name>
<gene>
    <name evidence="1" type="primary">htpG</name>
    <name type="ordered locus">Tbd_1078</name>
</gene>
<sequence length="633" mass="71167">MSATSSKETLGFQAEVKQLLQLMIHSLYSNKDIFLRELISNASDAADKLRFEALSDAALFENDPELKIRIAFDRDARTLTISDNGIGMSRQEVIDHIGTIAKSGTREFFSQLSGDQKKDAALIGQFGVGFYSAFIVADRVTLTTRRAGLTAEHGVRWESEGAGDYTLETVEKPQRGTEIVLHLREGEDEFLSDWKIKSVIRTYSDHITLPIVMKKTEWKDGVETPTDEDETVNKASALWARPKKDISDDEYNEFYKHVAHDFEPPLAWSHNRVEGKQEYISLLYVPSHAPFDLYDREKRHGIKLYVRRVFIMDDAEQLMPQYLRFVRGVIDSADLPLNVSREILQSSRDIDAIKNGSVKKVLGMLEDLAENQPEKYVEFWKEFGKVMKEGPGEDFANKEKIAGLLRFASTHTDTDAQVVSLKDYVGRMKEGQTAIYYITADSFAAAQHSPHLEIFRKKGIEVLLLSDRVDEWLTGNLHEFDGKPLKSVAKGGLDLGELEDEAEKTAQKEAEESMKPLVERIKAMLGERVKDVRVTHRLTDSPACLVTGEGDMSANLERLLKAAGQAAPTVKPTLEINPSHALVTRLDSESDEDRFKDWANLLFEQALLAEGGQLDDPASFVRRLNGLLAMLPG</sequence>
<keyword id="KW-0067">ATP-binding</keyword>
<keyword id="KW-0143">Chaperone</keyword>
<keyword id="KW-0963">Cytoplasm</keyword>
<keyword id="KW-0547">Nucleotide-binding</keyword>
<keyword id="KW-1185">Reference proteome</keyword>
<keyword id="KW-0346">Stress response</keyword>
<reference key="1">
    <citation type="journal article" date="2006" name="J. Bacteriol.">
        <title>The genome sequence of the obligately chemolithoautotrophic, facultatively anaerobic bacterium Thiobacillus denitrificans.</title>
        <authorList>
            <person name="Beller H.R."/>
            <person name="Chain P.S."/>
            <person name="Letain T.E."/>
            <person name="Chakicherla A."/>
            <person name="Larimer F.W."/>
            <person name="Richardson P.M."/>
            <person name="Coleman M.A."/>
            <person name="Wood A.P."/>
            <person name="Kelly D.P."/>
        </authorList>
    </citation>
    <scope>NUCLEOTIDE SEQUENCE [LARGE SCALE GENOMIC DNA]</scope>
    <source>
        <strain>ATCC 25259 / T1</strain>
    </source>
</reference>
<evidence type="ECO:0000255" key="1">
    <source>
        <dbReference type="HAMAP-Rule" id="MF_00505"/>
    </source>
</evidence>
<comment type="function">
    <text evidence="1">Molecular chaperone. Has ATPase activity.</text>
</comment>
<comment type="subunit">
    <text evidence="1">Homodimer.</text>
</comment>
<comment type="subcellular location">
    <subcellularLocation>
        <location evidence="1">Cytoplasm</location>
    </subcellularLocation>
</comment>
<comment type="similarity">
    <text evidence="1">Belongs to the heat shock protein 90 family.</text>
</comment>